<proteinExistence type="inferred from homology"/>
<gene>
    <name evidence="1" type="primary">hslV</name>
    <name type="ordered locus">RSc0043</name>
    <name type="ORF">RS01866</name>
</gene>
<keyword id="KW-0021">Allosteric enzyme</keyword>
<keyword id="KW-0963">Cytoplasm</keyword>
<keyword id="KW-0378">Hydrolase</keyword>
<keyword id="KW-0479">Metal-binding</keyword>
<keyword id="KW-0645">Protease</keyword>
<keyword id="KW-1185">Reference proteome</keyword>
<keyword id="KW-0915">Sodium</keyword>
<keyword id="KW-0888">Threonine protease</keyword>
<feature type="chain" id="PRO_0000148135" description="ATP-dependent protease subunit HslV">
    <location>
        <begin position="1"/>
        <end position="178"/>
    </location>
</feature>
<feature type="active site" evidence="1">
    <location>
        <position position="7"/>
    </location>
</feature>
<feature type="binding site" evidence="1">
    <location>
        <position position="162"/>
    </location>
    <ligand>
        <name>Na(+)</name>
        <dbReference type="ChEBI" id="CHEBI:29101"/>
    </ligand>
</feature>
<feature type="binding site" evidence="1">
    <location>
        <position position="165"/>
    </location>
    <ligand>
        <name>Na(+)</name>
        <dbReference type="ChEBI" id="CHEBI:29101"/>
    </ligand>
</feature>
<feature type="binding site" evidence="1">
    <location>
        <position position="168"/>
    </location>
    <ligand>
        <name>Na(+)</name>
        <dbReference type="ChEBI" id="CHEBI:29101"/>
    </ligand>
</feature>
<evidence type="ECO:0000255" key="1">
    <source>
        <dbReference type="HAMAP-Rule" id="MF_00248"/>
    </source>
</evidence>
<accession>Q8Y3D7</accession>
<comment type="function">
    <text evidence="1">Protease subunit of a proteasome-like degradation complex believed to be a general protein degrading machinery.</text>
</comment>
<comment type="catalytic activity">
    <reaction evidence="1">
        <text>ATP-dependent cleavage of peptide bonds with broad specificity.</text>
        <dbReference type="EC" id="3.4.25.2"/>
    </reaction>
</comment>
<comment type="activity regulation">
    <text evidence="1">Allosterically activated by HslU binding.</text>
</comment>
<comment type="subunit">
    <text evidence="1">A double ring-shaped homohexamer of HslV is capped on each side by a ring-shaped HslU homohexamer. The assembly of the HslU/HslV complex is dependent on binding of ATP.</text>
</comment>
<comment type="subcellular location">
    <subcellularLocation>
        <location evidence="1">Cytoplasm</location>
    </subcellularLocation>
</comment>
<comment type="similarity">
    <text evidence="1">Belongs to the peptidase T1B family. HslV subfamily.</text>
</comment>
<dbReference type="EC" id="3.4.25.2" evidence="1"/>
<dbReference type="EMBL" id="AL646052">
    <property type="protein sequence ID" value="CAD13571.1"/>
    <property type="molecule type" value="Genomic_DNA"/>
</dbReference>
<dbReference type="RefSeq" id="WP_011000010.1">
    <property type="nucleotide sequence ID" value="NC_003295.1"/>
</dbReference>
<dbReference type="SMR" id="Q8Y3D7"/>
<dbReference type="STRING" id="267608.RSc0043"/>
<dbReference type="MEROPS" id="T01.006"/>
<dbReference type="EnsemblBacteria" id="CAD13571">
    <property type="protein sequence ID" value="CAD13571"/>
    <property type="gene ID" value="RSc0043"/>
</dbReference>
<dbReference type="KEGG" id="rso:RSc0043"/>
<dbReference type="eggNOG" id="COG5405">
    <property type="taxonomic scope" value="Bacteria"/>
</dbReference>
<dbReference type="HOGENOM" id="CLU_093872_1_0_4"/>
<dbReference type="Proteomes" id="UP000001436">
    <property type="component" value="Chromosome"/>
</dbReference>
<dbReference type="GO" id="GO:0009376">
    <property type="term" value="C:HslUV protease complex"/>
    <property type="evidence" value="ECO:0007669"/>
    <property type="project" value="UniProtKB-UniRule"/>
</dbReference>
<dbReference type="GO" id="GO:0005839">
    <property type="term" value="C:proteasome core complex"/>
    <property type="evidence" value="ECO:0007669"/>
    <property type="project" value="InterPro"/>
</dbReference>
<dbReference type="GO" id="GO:0046872">
    <property type="term" value="F:metal ion binding"/>
    <property type="evidence" value="ECO:0007669"/>
    <property type="project" value="UniProtKB-KW"/>
</dbReference>
<dbReference type="GO" id="GO:0004298">
    <property type="term" value="F:threonine-type endopeptidase activity"/>
    <property type="evidence" value="ECO:0007669"/>
    <property type="project" value="UniProtKB-KW"/>
</dbReference>
<dbReference type="GO" id="GO:0051603">
    <property type="term" value="P:proteolysis involved in protein catabolic process"/>
    <property type="evidence" value="ECO:0007669"/>
    <property type="project" value="InterPro"/>
</dbReference>
<dbReference type="CDD" id="cd01913">
    <property type="entry name" value="protease_HslV"/>
    <property type="match status" value="1"/>
</dbReference>
<dbReference type="FunFam" id="3.60.20.10:FF:000002">
    <property type="entry name" value="ATP-dependent protease subunit HslV"/>
    <property type="match status" value="1"/>
</dbReference>
<dbReference type="Gene3D" id="3.60.20.10">
    <property type="entry name" value="Glutamine Phosphoribosylpyrophosphate, subunit 1, domain 1"/>
    <property type="match status" value="1"/>
</dbReference>
<dbReference type="HAMAP" id="MF_00248">
    <property type="entry name" value="HslV"/>
    <property type="match status" value="1"/>
</dbReference>
<dbReference type="InterPro" id="IPR022281">
    <property type="entry name" value="ATP-dep_Prtase_HsIV_su"/>
</dbReference>
<dbReference type="InterPro" id="IPR029055">
    <property type="entry name" value="Ntn_hydrolases_N"/>
</dbReference>
<dbReference type="InterPro" id="IPR001353">
    <property type="entry name" value="Proteasome_sua/b"/>
</dbReference>
<dbReference type="InterPro" id="IPR023333">
    <property type="entry name" value="Proteasome_suB-type"/>
</dbReference>
<dbReference type="NCBIfam" id="TIGR03692">
    <property type="entry name" value="ATP_dep_HslV"/>
    <property type="match status" value="1"/>
</dbReference>
<dbReference type="NCBIfam" id="NF003964">
    <property type="entry name" value="PRK05456.1"/>
    <property type="match status" value="1"/>
</dbReference>
<dbReference type="PANTHER" id="PTHR32194:SF0">
    <property type="entry name" value="ATP-DEPENDENT PROTEASE SUBUNIT HSLV"/>
    <property type="match status" value="1"/>
</dbReference>
<dbReference type="PANTHER" id="PTHR32194">
    <property type="entry name" value="METALLOPROTEASE TLDD"/>
    <property type="match status" value="1"/>
</dbReference>
<dbReference type="Pfam" id="PF00227">
    <property type="entry name" value="Proteasome"/>
    <property type="match status" value="1"/>
</dbReference>
<dbReference type="PIRSF" id="PIRSF039093">
    <property type="entry name" value="HslV"/>
    <property type="match status" value="1"/>
</dbReference>
<dbReference type="SUPFAM" id="SSF56235">
    <property type="entry name" value="N-terminal nucleophile aminohydrolases (Ntn hydrolases)"/>
    <property type="match status" value="1"/>
</dbReference>
<dbReference type="PROSITE" id="PS51476">
    <property type="entry name" value="PROTEASOME_BETA_2"/>
    <property type="match status" value="1"/>
</dbReference>
<organism>
    <name type="scientific">Ralstonia nicotianae (strain ATCC BAA-1114 / GMI1000)</name>
    <name type="common">Ralstonia solanacearum</name>
    <dbReference type="NCBI Taxonomy" id="267608"/>
    <lineage>
        <taxon>Bacteria</taxon>
        <taxon>Pseudomonadati</taxon>
        <taxon>Pseudomonadota</taxon>
        <taxon>Betaproteobacteria</taxon>
        <taxon>Burkholderiales</taxon>
        <taxon>Burkholderiaceae</taxon>
        <taxon>Ralstonia</taxon>
        <taxon>Ralstonia solanacearum species complex</taxon>
    </lineage>
</organism>
<sequence>MEQYHGTTIVSVRRGNQVALGGDGQVTLGNIVMKGTARKVRTIYDGKVLVGFAGATADAFSLLDRFEAKLQKYQGHLLRAAVDLAKDWRTDRALRHLEAMLIVADRESTLVITGNGDVLDPEGGIAAIGSGGAYAQSAAKALMENTELAPRDVVEKSLRIAGELCIYTNTNFVIETLE</sequence>
<reference key="1">
    <citation type="journal article" date="2002" name="Nature">
        <title>Genome sequence of the plant pathogen Ralstonia solanacearum.</title>
        <authorList>
            <person name="Salanoubat M."/>
            <person name="Genin S."/>
            <person name="Artiguenave F."/>
            <person name="Gouzy J."/>
            <person name="Mangenot S."/>
            <person name="Arlat M."/>
            <person name="Billault A."/>
            <person name="Brottier P."/>
            <person name="Camus J.-C."/>
            <person name="Cattolico L."/>
            <person name="Chandler M."/>
            <person name="Choisne N."/>
            <person name="Claudel-Renard C."/>
            <person name="Cunnac S."/>
            <person name="Demange N."/>
            <person name="Gaspin C."/>
            <person name="Lavie M."/>
            <person name="Moisan A."/>
            <person name="Robert C."/>
            <person name="Saurin W."/>
            <person name="Schiex T."/>
            <person name="Siguier P."/>
            <person name="Thebault P."/>
            <person name="Whalen M."/>
            <person name="Wincker P."/>
            <person name="Levy M."/>
            <person name="Weissenbach J."/>
            <person name="Boucher C.A."/>
        </authorList>
    </citation>
    <scope>NUCLEOTIDE SEQUENCE [LARGE SCALE GENOMIC DNA]</scope>
    <source>
        <strain>ATCC BAA-1114 / GMI1000</strain>
    </source>
</reference>
<protein>
    <recommendedName>
        <fullName evidence="1">ATP-dependent protease subunit HslV</fullName>
        <ecNumber evidence="1">3.4.25.2</ecNumber>
    </recommendedName>
</protein>
<name>HSLV_RALN1</name>